<dbReference type="EC" id="4.1.1.25" evidence="2 3"/>
<dbReference type="EMBL" id="JX204286">
    <property type="protein sequence ID" value="AFP73381.1"/>
    <property type="molecule type" value="Genomic_DNA"/>
</dbReference>
<dbReference type="EMBL" id="JXUF01000002">
    <property type="protein sequence ID" value="KIO94105.1"/>
    <property type="molecule type" value="Genomic_DNA"/>
</dbReference>
<dbReference type="EMBL" id="NVYO01000001">
    <property type="protein sequence ID" value="PBQ24843.1"/>
    <property type="molecule type" value="Genomic_DNA"/>
</dbReference>
<dbReference type="EMBL" id="CP031198">
    <property type="protein sequence ID" value="QCZ54275.1"/>
    <property type="molecule type" value="Genomic_DNA"/>
</dbReference>
<dbReference type="RefSeq" id="WP_011668784.1">
    <property type="nucleotide sequence ID" value="NZ_VDMV01000023.1"/>
</dbReference>
<dbReference type="PDB" id="5HSI">
    <property type="method" value="X-ray"/>
    <property type="resolution" value="1.73 A"/>
    <property type="chains" value="A/B=1-626"/>
</dbReference>
<dbReference type="PDB" id="5HSJ">
    <property type="method" value="X-ray"/>
    <property type="resolution" value="1.90 A"/>
    <property type="chains" value="A/B=1-626"/>
</dbReference>
<dbReference type="PDBsum" id="5HSI"/>
<dbReference type="PDBsum" id="5HSJ"/>
<dbReference type="SMR" id="J7GQ11"/>
<dbReference type="PATRIC" id="fig|1580.52.peg.219"/>
<dbReference type="OMA" id="ANYEGLW"/>
<dbReference type="BRENDA" id="4.1.1.25">
    <property type="organism ID" value="2851"/>
</dbReference>
<dbReference type="Proteomes" id="UP000217918">
    <property type="component" value="Unassembled WGS sequence"/>
</dbReference>
<dbReference type="Proteomes" id="UP000307074">
    <property type="component" value="Chromosome"/>
</dbReference>
<dbReference type="GO" id="GO:0036468">
    <property type="term" value="F:L-dopa decarboxylase activity"/>
    <property type="evidence" value="ECO:0000314"/>
    <property type="project" value="UniProtKB"/>
</dbReference>
<dbReference type="GO" id="GO:0030170">
    <property type="term" value="F:pyridoxal phosphate binding"/>
    <property type="evidence" value="ECO:0000314"/>
    <property type="project" value="UniProtKB"/>
</dbReference>
<dbReference type="GO" id="GO:0004837">
    <property type="term" value="F:tyrosine decarboxylase activity"/>
    <property type="evidence" value="ECO:0000314"/>
    <property type="project" value="UniProtKB"/>
</dbReference>
<dbReference type="GO" id="GO:0019752">
    <property type="term" value="P:carboxylic acid metabolic process"/>
    <property type="evidence" value="ECO:0007669"/>
    <property type="project" value="InterPro"/>
</dbReference>
<dbReference type="Gene3D" id="3.40.640.10">
    <property type="entry name" value="Type I PLP-dependent aspartate aminotransferase-like (Major domain)"/>
    <property type="match status" value="1"/>
</dbReference>
<dbReference type="InterPro" id="IPR050477">
    <property type="entry name" value="GrpII_AminoAcid_Decarb"/>
</dbReference>
<dbReference type="InterPro" id="IPR002129">
    <property type="entry name" value="PyrdxlP-dep_de-COase"/>
</dbReference>
<dbReference type="InterPro" id="IPR015424">
    <property type="entry name" value="PyrdxlP-dep_Trfase"/>
</dbReference>
<dbReference type="InterPro" id="IPR015421">
    <property type="entry name" value="PyrdxlP-dep_Trfase_major"/>
</dbReference>
<dbReference type="InterPro" id="IPR049373">
    <property type="entry name" value="TyrDC_C"/>
</dbReference>
<dbReference type="InterPro" id="IPR022397">
    <property type="entry name" value="Tyrosine_deCO2ase_bac"/>
</dbReference>
<dbReference type="NCBIfam" id="TIGR03811">
    <property type="entry name" value="tyr_de_CO2_Ent"/>
    <property type="match status" value="1"/>
</dbReference>
<dbReference type="PANTHER" id="PTHR42735">
    <property type="match status" value="1"/>
</dbReference>
<dbReference type="PANTHER" id="PTHR42735:SF4">
    <property type="entry name" value="PYRIDOXAL PHOSPHATE-DEPENDENT DECARBOXYLASE FAMILY PROTEIN"/>
    <property type="match status" value="1"/>
</dbReference>
<dbReference type="Pfam" id="PF00282">
    <property type="entry name" value="Pyridoxal_deC"/>
    <property type="match status" value="1"/>
</dbReference>
<dbReference type="Pfam" id="PF21391">
    <property type="entry name" value="tyr_de_CO2_C"/>
    <property type="match status" value="1"/>
</dbReference>
<dbReference type="SUPFAM" id="SSF53383">
    <property type="entry name" value="PLP-dependent transferases"/>
    <property type="match status" value="1"/>
</dbReference>
<accession>J7GQ11</accession>
<comment type="function">
    <text evidence="2 3">Catalyzes the decarboxylation of L-tyrosine to produce tyramine (PubMed:24211777, PubMed:27292129). Cannot use other aromatic L-amino acids as substrates like L-phenylalanine, L-tryptophan and L-glutamate (PubMed:24211777).</text>
</comment>
<comment type="function">
    <text evidence="2 3">Is also able to decarboxylate the Parkinson's disease medication levodopa (L-dopa) to dopamine in vitro.</text>
</comment>
<comment type="catalytic activity">
    <reaction evidence="2 3">
        <text>L-tyrosine + H(+) = tyramine + CO2</text>
        <dbReference type="Rhea" id="RHEA:14345"/>
        <dbReference type="ChEBI" id="CHEBI:15378"/>
        <dbReference type="ChEBI" id="CHEBI:16526"/>
        <dbReference type="ChEBI" id="CHEBI:58315"/>
        <dbReference type="ChEBI" id="CHEBI:327995"/>
        <dbReference type="EC" id="4.1.1.25"/>
    </reaction>
    <physiologicalReaction direction="left-to-right" evidence="6 7">
        <dbReference type="Rhea" id="RHEA:14346"/>
    </physiologicalReaction>
</comment>
<comment type="catalytic activity">
    <reaction evidence="2 3">
        <text>L-dopa + H(+) = dopamine + CO2</text>
        <dbReference type="Rhea" id="RHEA:12272"/>
        <dbReference type="ChEBI" id="CHEBI:15378"/>
        <dbReference type="ChEBI" id="CHEBI:16526"/>
        <dbReference type="ChEBI" id="CHEBI:57504"/>
        <dbReference type="ChEBI" id="CHEBI:59905"/>
    </reaction>
</comment>
<comment type="cofactor">
    <cofactor evidence="2">
        <name>pyridoxal 5'-phosphate</name>
        <dbReference type="ChEBI" id="CHEBI:597326"/>
    </cofactor>
</comment>
<comment type="biophysicochemical properties">
    <kinetics>
        <KM evidence="2">0.59 mM for L-tyrosine</KM>
        <KM evidence="3">0.6 mM for L-tyrosine</KM>
        <KM evidence="3">0.8 mM for L-dopa</KM>
        <Vmax evidence="2">147.1 umol/min/mg enzyme for the decarboxylation of L-tyrosine</Vmax>
        <text evidence="2 3">kcat is 343.1 sec(-1) for the decarboxylation of L-tyrosine (PubMed:24211777). kcat is 124.8 sec(-1) for the decarboxylation of L-tyrosine. kcat is 76.5 sec(-1) for the decarboxylation of L-dopa (PubMed:27292129).</text>
    </kinetics>
    <phDependence>
        <text evidence="2">Optimum pH is 5.0 for the decarboxylation of L-tyrosine. Is not active at pH below 3.5 or above 9.0. More than 90% of activity remains over pH range from 5.0 to 6.0, and activity decreases rapidly at pH below 5.0 or higher than 6.0.</text>
    </phDependence>
    <temperatureDependence>
        <text evidence="2">Optimum temperature is 50 degrees Celsius. Only 8.5% of activity remains at 70 degrees Celsius. However, the enzyme shows poor stability at 50 degrees Celsius, the relative activity dropped to 14% after 1 h of incubation.</text>
    </temperatureDependence>
</comment>
<comment type="pathway">
    <text evidence="6">Amino-acid metabolism.</text>
</comment>
<comment type="subunit">
    <text evidence="2 3">Homodimer.</text>
</comment>
<comment type="miscellaneous">
    <text evidence="1">In gut microbiota this enzyme is in fact exclusively responsible for the decarboxylation of levodopa, and thus reduces in situ levels of levodopa in the treatment of Parkinson's disease. It was shown that abundance of bacterial tyrosine decarboxylase in the proximal small intestine - the primary site of levodopa absorption - contributes to interindividual variation in drug efficacy and can explain the requirement for an increased dosage regimen of levodopa treatment in Parkinson's disease patients.</text>
</comment>
<comment type="similarity">
    <text evidence="5">Belongs to the group II decarboxylase family. Tyrosine decarboxylase subfamily.</text>
</comment>
<name>TYRDC_LEVBR</name>
<evidence type="ECO:0000250" key="1">
    <source>
        <dbReference type="UniProtKB" id="Q838D6"/>
    </source>
</evidence>
<evidence type="ECO:0000269" key="2">
    <source>
    </source>
</evidence>
<evidence type="ECO:0000269" key="3">
    <source>
    </source>
</evidence>
<evidence type="ECO:0000303" key="4">
    <source>
    </source>
</evidence>
<evidence type="ECO:0000305" key="5"/>
<evidence type="ECO:0000305" key="6">
    <source>
    </source>
</evidence>
<evidence type="ECO:0000305" key="7">
    <source>
    </source>
</evidence>
<evidence type="ECO:0000312" key="8">
    <source>
        <dbReference type="EMBL" id="AFP73381.1"/>
    </source>
</evidence>
<evidence type="ECO:0000312" key="9">
    <source>
        <dbReference type="EMBL" id="KIO94105.1"/>
    </source>
</evidence>
<evidence type="ECO:0000312" key="10">
    <source>
        <dbReference type="EMBL" id="PBQ24843.1"/>
    </source>
</evidence>
<evidence type="ECO:0000312" key="11">
    <source>
        <dbReference type="EMBL" id="QCZ54275.1"/>
    </source>
</evidence>
<evidence type="ECO:0007744" key="12">
    <source>
        <dbReference type="PDB" id="5HSI"/>
    </source>
</evidence>
<evidence type="ECO:0007744" key="13">
    <source>
        <dbReference type="PDB" id="5HSJ"/>
    </source>
</evidence>
<evidence type="ECO:0007829" key="14">
    <source>
        <dbReference type="PDB" id="5HSI"/>
    </source>
</evidence>
<keyword id="KW-0002">3D-structure</keyword>
<keyword id="KW-0210">Decarboxylase</keyword>
<keyword id="KW-0456">Lyase</keyword>
<keyword id="KW-0663">Pyridoxal phosphate</keyword>
<reference key="1">
    <citation type="journal article" date="2014" name="Protein Expr. Purif.">
        <title>Tyrosine decarboxylase from Lactobacillus brevis: Soluble expression and characterization.</title>
        <authorList>
            <person name="Zhang K."/>
            <person name="Ni Y."/>
        </authorList>
    </citation>
    <scope>NUCLEOTIDE SEQUENCE [GENOMIC DNA]</scope>
    <scope>FUNCTION</scope>
    <scope>CATALYTIC ACTIVITY</scope>
    <scope>BIOPHYSICOCHEMICAL PROPERTIES</scope>
    <scope>COFACTOR</scope>
    <scope>SUBSTRATE SPECIFICITY</scope>
    <scope>SUBUNIT</scope>
    <source>
        <strain>CGMCC 1.2028</strain>
    </source>
</reference>
<reference key="2">
    <citation type="submission" date="2015-01" db="EMBL/GenBank/DDBJ databases">
        <title>Identification of ecotype-specific marker genes for categorization of beer-spoiling Lactobacillus brevis.</title>
        <authorList>
            <person name="Behr J."/>
            <person name="Preissler P."/>
            <person name="Geissler A.J."/>
            <person name="Ehrenreich A."/>
            <person name="Angelov A."/>
            <person name="Vogel R.F."/>
        </authorList>
    </citation>
    <scope>NUCLEOTIDE SEQUENCE [LARGE SCALE GENOMIC DNA]</scope>
    <source>
        <strain>TMW 1.313</strain>
    </source>
</reference>
<reference key="3">
    <citation type="submission" date="2017-09" db="EMBL/GenBank/DDBJ databases">
        <title>Genome sequence of Lactobacillus brevis D7.</title>
        <authorList>
            <person name="Kwon M.-S."/>
            <person name="Lim S.K."/>
            <person name="Choi H.-J."/>
        </authorList>
    </citation>
    <scope>NUCLEOTIDE SEQUENCE [LARGE SCALE GENOMIC DNA]</scope>
    <source>
        <strain>D7</strain>
    </source>
</reference>
<reference key="4">
    <citation type="submission" date="2018-07" db="EMBL/GenBank/DDBJ databases">
        <authorList>
            <person name="Feyereisen M."/>
        </authorList>
    </citation>
    <scope>NUCLEOTIDE SEQUENCE [LARGE SCALE GENOMIC DNA]</scope>
    <source>
        <strain>UCCLBBS449</strain>
    </source>
</reference>
<reference evidence="12 13" key="5">
    <citation type="journal article" date="2016" name="Sci. Rep.">
        <title>Crystal structure of tyrosine decarboxylase and identification of key residues involved in conformational swing and substrate binding.</title>
        <authorList>
            <person name="Zhu H."/>
            <person name="Xu G."/>
            <person name="Zhang K."/>
            <person name="Kong X."/>
            <person name="Han R."/>
            <person name="Zhou J."/>
            <person name="Ni Y."/>
        </authorList>
    </citation>
    <scope>X-RAY CRYSTALLOGRAPHY (1.73 ANGSTROMS) OF APOENZYME AND IN COMPLEX WITH PLP</scope>
    <scope>PYRIDOXAL PHOSPHATE AT LYS-392</scope>
    <scope>FUNCTION</scope>
    <scope>CATALYTIC ACTIVITY</scope>
    <scope>BIOPHYSICOCHEMICAL PROPERTIES</scope>
    <scope>SUBUNIT</scope>
    <scope>MUTAGENESIS OF HIS-241; TYR-398; TYR-420 AND SER-586</scope>
    <scope>ACTIVE SITE</scope>
    <source>
        <strain>CGMCC 1.2028</strain>
    </source>
</reference>
<sequence length="626" mass="70507">MEKSNRSLKDLDLNALFIGDKAENGQLYKDLLNKLVDEHLGWRKNYIPSDPNMIGPEDQNSPAFKKTVGHMKTVLDQLSERIRTESVPWHSAGRYWGHMNSETLMPALLAYNYAMLWNGNNVAYESSPATSQMEEEVGQEFARLMGYDYGWGHIVADGSLANLEGLWYARNIKSLPFAMKEVNPELVAGKSDWELLNMPTKEIMDLLENAGSQIDEVKKRSARSGKNLQRLGKWLVPQTKHYSWMKAADIIGIGLDQVVPVPIDSNYRMDIQALESIIRKYAAEKTPILGVVGVAGSTEEGAVDGIDKIVALRQKLQKEGIYFYLHVDAAYGGYARALFLDEDDQFIPYKNLQKVHAENHVFTEDKEYIKPEVYAAYKAFDQAESITIDPHKMGYVPYSAGGIVIQDIRMRDTISYFATYVFEKGADIPALLGAYILEGSKAGATAASVWAAHHTLPLNVTGYGKLEGASIEGAHRYYDFLKNLKFEVAGKRISVHPLISPDFNMVDYVLKEDGNDDLIEMNRLNHAFYEQASYVKGSLYGKEYIVSHTDFAIPDYGDSPLAFVESLGFSEVEWRHAGKVTIIRASVMTPYMNQRENFDYFAPRIKKAIQADLEKVYASVNQKENV</sequence>
<proteinExistence type="evidence at protein level"/>
<gene>
    <name evidence="4 8" type="primary">tdc</name>
    <name evidence="10" type="ORF">CNR29_12740</name>
    <name evidence="9" type="ORF">N624_0219</name>
    <name evidence="11" type="ORF">UCCLBBS449_2369</name>
</gene>
<protein>
    <recommendedName>
        <fullName evidence="4">L-tyrosine decarboxylase</fullName>
        <shortName evidence="4">TDC</shortName>
        <ecNumber evidence="2 3">4.1.1.25</ecNumber>
    </recommendedName>
</protein>
<feature type="chain" id="PRO_0000448497" description="L-tyrosine decarboxylase">
    <location>
        <begin position="1"/>
        <end position="626"/>
    </location>
</feature>
<feature type="active site" description="Proton donor" evidence="7">
    <location>
        <position position="420"/>
    </location>
</feature>
<feature type="binding site" description="in other chain" evidence="3">
    <location>
        <begin position="158"/>
        <end position="159"/>
    </location>
    <ligand>
        <name>pyridoxal 5'-phosphate</name>
        <dbReference type="ChEBI" id="CHEBI:597326"/>
        <note>ligand shared between dimeric partners</note>
    </ligand>
</feature>
<feature type="binding site" description="in other chain" evidence="3">
    <location>
        <position position="298"/>
    </location>
    <ligand>
        <name>pyridoxal 5'-phosphate</name>
        <dbReference type="ChEBI" id="CHEBI:597326"/>
        <note>ligand shared between dimeric partners</note>
    </ligand>
</feature>
<feature type="binding site" description="in other chain" evidence="3">
    <location>
        <begin position="389"/>
        <end position="391"/>
    </location>
    <ligand>
        <name>pyridoxal 5'-phosphate</name>
        <dbReference type="ChEBI" id="CHEBI:597326"/>
        <note>ligand shared between dimeric partners</note>
    </ligand>
</feature>
<feature type="binding site" evidence="3">
    <location>
        <position position="440"/>
    </location>
    <ligand>
        <name>pyridoxal 5'-phosphate</name>
        <dbReference type="ChEBI" id="CHEBI:597326"/>
        <note>ligand shared between dimeric partners</note>
    </ligand>
</feature>
<feature type="modified residue" description="N6-(pyridoxal phosphate)lysine" evidence="3 13">
    <location>
        <position position="392"/>
    </location>
</feature>
<feature type="mutagenesis site" description="Complete loss of catalytic activity." evidence="3">
    <original>H</original>
    <variation>A</variation>
    <location>
        <position position="241"/>
    </location>
</feature>
<feature type="mutagenesis site" description="Almost complete loss of catalytic activity." evidence="3">
    <original>H</original>
    <variation>N</variation>
    <variation>Q</variation>
    <location>
        <position position="241"/>
    </location>
</feature>
<feature type="mutagenesis site" description="High decrease in catalytic efficiency." evidence="3">
    <original>Y</original>
    <variation>A</variation>
    <location>
        <position position="398"/>
    </location>
</feature>
<feature type="mutagenesis site" description="Complete loss of catalytic activity." evidence="3">
    <original>Y</original>
    <variation>A</variation>
    <variation>F</variation>
    <location>
        <position position="420"/>
    </location>
</feature>
<feature type="mutagenesis site" description="Increase in catalytic efficiency and substrate affinity." evidence="3">
    <original>S</original>
    <variation>A</variation>
    <location>
        <position position="586"/>
    </location>
</feature>
<feature type="helix" evidence="14">
    <location>
        <begin position="13"/>
        <end position="16"/>
    </location>
</feature>
<feature type="helix" evidence="14">
    <location>
        <begin position="25"/>
        <end position="45"/>
    </location>
</feature>
<feature type="strand" evidence="14">
    <location>
        <begin position="46"/>
        <end position="48"/>
    </location>
</feature>
<feature type="helix" evidence="14">
    <location>
        <begin position="56"/>
        <end position="59"/>
    </location>
</feature>
<feature type="helix" evidence="14">
    <location>
        <begin position="62"/>
        <end position="85"/>
    </location>
</feature>
<feature type="turn" evidence="14">
    <location>
        <begin position="92"/>
        <end position="94"/>
    </location>
</feature>
<feature type="strand" evidence="14">
    <location>
        <begin position="95"/>
        <end position="98"/>
    </location>
</feature>
<feature type="helix" evidence="14">
    <location>
        <begin position="105"/>
        <end position="115"/>
    </location>
</feature>
<feature type="helix" evidence="14">
    <location>
        <begin position="124"/>
        <end position="126"/>
    </location>
</feature>
<feature type="helix" evidence="14">
    <location>
        <begin position="128"/>
        <end position="144"/>
    </location>
</feature>
<feature type="strand" evidence="14">
    <location>
        <begin position="151"/>
        <end position="157"/>
    </location>
</feature>
<feature type="helix" evidence="14">
    <location>
        <begin position="158"/>
        <end position="182"/>
    </location>
</feature>
<feature type="helix" evidence="14">
    <location>
        <begin position="184"/>
        <end position="187"/>
    </location>
</feature>
<feature type="helix" evidence="14">
    <location>
        <begin position="192"/>
        <end position="195"/>
    </location>
</feature>
<feature type="helix" evidence="14">
    <location>
        <begin position="200"/>
        <end position="209"/>
    </location>
</feature>
<feature type="helix" evidence="14">
    <location>
        <begin position="210"/>
        <end position="213"/>
    </location>
</feature>
<feature type="helix" evidence="14">
    <location>
        <begin position="214"/>
        <end position="219"/>
    </location>
</feature>
<feature type="helix" evidence="14">
    <location>
        <begin position="222"/>
        <end position="224"/>
    </location>
</feature>
<feature type="helix" evidence="14">
    <location>
        <begin position="228"/>
        <end position="231"/>
    </location>
</feature>
<feature type="strand" evidence="14">
    <location>
        <begin position="233"/>
        <end position="237"/>
    </location>
</feature>
<feature type="helix" evidence="14">
    <location>
        <begin position="238"/>
        <end position="240"/>
    </location>
</feature>
<feature type="helix" evidence="14">
    <location>
        <begin position="241"/>
        <end position="250"/>
    </location>
</feature>
<feature type="helix" evidence="14">
    <location>
        <begin position="255"/>
        <end position="257"/>
    </location>
</feature>
<feature type="strand" evidence="14">
    <location>
        <begin position="258"/>
        <end position="261"/>
    </location>
</feature>
<feature type="strand" evidence="14">
    <location>
        <begin position="267"/>
        <end position="269"/>
    </location>
</feature>
<feature type="helix" evidence="14">
    <location>
        <begin position="271"/>
        <end position="283"/>
    </location>
</feature>
<feature type="strand" evidence="14">
    <location>
        <begin position="288"/>
        <end position="296"/>
    </location>
</feature>
<feature type="turn" evidence="14">
    <location>
        <begin position="298"/>
        <end position="300"/>
    </location>
</feature>
<feature type="helix" evidence="14">
    <location>
        <begin position="306"/>
        <end position="317"/>
    </location>
</feature>
<feature type="turn" evidence="14">
    <location>
        <begin position="318"/>
        <end position="320"/>
    </location>
</feature>
<feature type="strand" evidence="14">
    <location>
        <begin position="324"/>
        <end position="328"/>
    </location>
</feature>
<feature type="turn" evidence="14">
    <location>
        <begin position="330"/>
        <end position="332"/>
    </location>
</feature>
<feature type="helix" evidence="14">
    <location>
        <begin position="333"/>
        <end position="339"/>
    </location>
</feature>
<feature type="helix" evidence="14">
    <location>
        <begin position="349"/>
        <end position="351"/>
    </location>
</feature>
<feature type="helix" evidence="14">
    <location>
        <begin position="352"/>
        <end position="358"/>
    </location>
</feature>
<feature type="strand" evidence="14">
    <location>
        <begin position="361"/>
        <end position="364"/>
    </location>
</feature>
<feature type="helix" evidence="14">
    <location>
        <begin position="371"/>
        <end position="378"/>
    </location>
</feature>
<feature type="helix" evidence="14">
    <location>
        <begin position="379"/>
        <end position="382"/>
    </location>
</feature>
<feature type="strand" evidence="14">
    <location>
        <begin position="383"/>
        <end position="387"/>
    </location>
</feature>
<feature type="turn" evidence="14">
    <location>
        <begin position="390"/>
        <end position="394"/>
    </location>
</feature>
<feature type="strand" evidence="14">
    <location>
        <begin position="401"/>
        <end position="407"/>
    </location>
</feature>
<feature type="helix" evidence="14">
    <location>
        <begin position="408"/>
        <end position="413"/>
    </location>
</feature>
<feature type="helix" evidence="14">
    <location>
        <begin position="432"/>
        <end position="435"/>
    </location>
</feature>
<feature type="helix" evidence="14">
    <location>
        <begin position="443"/>
        <end position="455"/>
    </location>
</feature>
<feature type="turn" evidence="14">
    <location>
        <begin position="460"/>
        <end position="462"/>
    </location>
</feature>
<feature type="helix" evidence="14">
    <location>
        <begin position="463"/>
        <end position="481"/>
    </location>
</feature>
<feature type="strand" evidence="14">
    <location>
        <begin position="485"/>
        <end position="488"/>
    </location>
</feature>
<feature type="strand" evidence="14">
    <location>
        <begin position="491"/>
        <end position="497"/>
    </location>
</feature>
<feature type="strand" evidence="14">
    <location>
        <begin position="502"/>
        <end position="512"/>
    </location>
</feature>
<feature type="helix" evidence="14">
    <location>
        <begin position="518"/>
        <end position="531"/>
    </location>
</feature>
<feature type="strand" evidence="14">
    <location>
        <begin position="545"/>
        <end position="552"/>
    </location>
</feature>
<feature type="helix" evidence="14">
    <location>
        <begin position="553"/>
        <end position="556"/>
    </location>
</feature>
<feature type="turn" evidence="14">
    <location>
        <begin position="557"/>
        <end position="560"/>
    </location>
</feature>
<feature type="helix" evidence="14">
    <location>
        <begin position="561"/>
        <end position="566"/>
    </location>
</feature>
<feature type="helix" evidence="14">
    <location>
        <begin position="571"/>
        <end position="577"/>
    </location>
</feature>
<feature type="strand" evidence="14">
    <location>
        <begin position="579"/>
        <end position="586"/>
    </location>
</feature>
<feature type="helix" evidence="14">
    <location>
        <begin position="595"/>
        <end position="618"/>
    </location>
</feature>
<organism>
    <name type="scientific">Levilactobacillus brevis</name>
    <name type="common">Lactobacillus brevis</name>
    <dbReference type="NCBI Taxonomy" id="1580"/>
    <lineage>
        <taxon>Bacteria</taxon>
        <taxon>Bacillati</taxon>
        <taxon>Bacillota</taxon>
        <taxon>Bacilli</taxon>
        <taxon>Lactobacillales</taxon>
        <taxon>Lactobacillaceae</taxon>
        <taxon>Levilactobacillus</taxon>
    </lineage>
</organism>